<keyword id="KW-0963">Cytoplasm</keyword>
<keyword id="KW-0285">Flavoprotein</keyword>
<keyword id="KW-0288">FMN</keyword>
<keyword id="KW-0520">NAD</keyword>
<keyword id="KW-0560">Oxidoreductase</keyword>
<keyword id="KW-0665">Pyrimidine biosynthesis</keyword>
<keyword id="KW-1185">Reference proteome</keyword>
<reference key="1">
    <citation type="journal article" date="2002" name="Genome Res.">
        <title>The genome of Methanosarcina acetivorans reveals extensive metabolic and physiological diversity.</title>
        <authorList>
            <person name="Galagan J.E."/>
            <person name="Nusbaum C."/>
            <person name="Roy A."/>
            <person name="Endrizzi M.G."/>
            <person name="Macdonald P."/>
            <person name="FitzHugh W."/>
            <person name="Calvo S."/>
            <person name="Engels R."/>
            <person name="Smirnov S."/>
            <person name="Atnoor D."/>
            <person name="Brown A."/>
            <person name="Allen N."/>
            <person name="Naylor J."/>
            <person name="Stange-Thomann N."/>
            <person name="DeArellano K."/>
            <person name="Johnson R."/>
            <person name="Linton L."/>
            <person name="McEwan P."/>
            <person name="McKernan K."/>
            <person name="Talamas J."/>
            <person name="Tirrell A."/>
            <person name="Ye W."/>
            <person name="Zimmer A."/>
            <person name="Barber R.D."/>
            <person name="Cann I."/>
            <person name="Graham D.E."/>
            <person name="Grahame D.A."/>
            <person name="Guss A.M."/>
            <person name="Hedderich R."/>
            <person name="Ingram-Smith C."/>
            <person name="Kuettner H.C."/>
            <person name="Krzycki J.A."/>
            <person name="Leigh J.A."/>
            <person name="Li W."/>
            <person name="Liu J."/>
            <person name="Mukhopadhyay B."/>
            <person name="Reeve J.N."/>
            <person name="Smith K."/>
            <person name="Springer T.A."/>
            <person name="Umayam L.A."/>
            <person name="White O."/>
            <person name="White R.H."/>
            <person name="de Macario E.C."/>
            <person name="Ferry J.G."/>
            <person name="Jarrell K.F."/>
            <person name="Jing H."/>
            <person name="Macario A.J.L."/>
            <person name="Paulsen I.T."/>
            <person name="Pritchett M."/>
            <person name="Sowers K.R."/>
            <person name="Swanson R.V."/>
            <person name="Zinder S.H."/>
            <person name="Lander E."/>
            <person name="Metcalf W.W."/>
            <person name="Birren B."/>
        </authorList>
    </citation>
    <scope>NUCLEOTIDE SEQUENCE [LARGE SCALE GENOMIC DNA]</scope>
    <source>
        <strain>ATCC 35395 / DSM 2834 / JCM 12185 / C2A</strain>
    </source>
</reference>
<protein>
    <recommendedName>
        <fullName>Dihydroorotate dehydrogenase B (NAD(+)), catalytic subunit</fullName>
        <shortName>DHOD B</shortName>
        <shortName>DHODase B</shortName>
        <shortName>DHOdehase B</shortName>
        <ecNumber>1.3.1.14</ecNumber>
    </recommendedName>
    <alternativeName>
        <fullName>Dihydroorotate oxidase B</fullName>
    </alternativeName>
    <alternativeName>
        <fullName>Orotate reductase (NADH)</fullName>
    </alternativeName>
</protein>
<organism>
    <name type="scientific">Methanosarcina acetivorans (strain ATCC 35395 / DSM 2834 / JCM 12185 / C2A)</name>
    <dbReference type="NCBI Taxonomy" id="188937"/>
    <lineage>
        <taxon>Archaea</taxon>
        <taxon>Methanobacteriati</taxon>
        <taxon>Methanobacteriota</taxon>
        <taxon>Stenosarchaea group</taxon>
        <taxon>Methanomicrobia</taxon>
        <taxon>Methanosarcinales</taxon>
        <taxon>Methanosarcinaceae</taxon>
        <taxon>Methanosarcina</taxon>
    </lineage>
</organism>
<comment type="function">
    <text evidence="1">Catalyzes the conversion of dihydroorotate to orotate with NAD(+) as electron acceptor.</text>
</comment>
<comment type="catalytic activity">
    <reaction>
        <text>(S)-dihydroorotate + NAD(+) = orotate + NADH + H(+)</text>
        <dbReference type="Rhea" id="RHEA:13513"/>
        <dbReference type="ChEBI" id="CHEBI:15378"/>
        <dbReference type="ChEBI" id="CHEBI:30839"/>
        <dbReference type="ChEBI" id="CHEBI:30864"/>
        <dbReference type="ChEBI" id="CHEBI:57540"/>
        <dbReference type="ChEBI" id="CHEBI:57945"/>
        <dbReference type="EC" id="1.3.1.14"/>
    </reaction>
</comment>
<comment type="cofactor">
    <cofactor evidence="1">
        <name>FMN</name>
        <dbReference type="ChEBI" id="CHEBI:58210"/>
    </cofactor>
    <text evidence="1">Binds 1 FMN per subunit.</text>
</comment>
<comment type="pathway">
    <text>Pyrimidine metabolism; UMP biosynthesis via de novo pathway; orotate from (S)-dihydroorotate (NAD(+) route): step 1/1.</text>
</comment>
<comment type="subunit">
    <text evidence="1">Heterotetramer of 2 PyrK and 2 PyrD type B subunits.</text>
</comment>
<comment type="subcellular location">
    <subcellularLocation>
        <location evidence="1">Cytoplasm</location>
    </subcellularLocation>
</comment>
<comment type="similarity">
    <text evidence="2">Belongs to the dihydroorotate dehydrogenase family. Type 1 subfamily.</text>
</comment>
<accession>Q8TT55</accession>
<proteinExistence type="inferred from homology"/>
<gene>
    <name type="primary">pyrD</name>
    <name type="ordered locus">MA_0583</name>
</gene>
<feature type="chain" id="PRO_0000148408" description="Dihydroorotate dehydrogenase B (NAD(+)), catalytic subunit">
    <location>
        <begin position="1"/>
        <end position="311"/>
    </location>
</feature>
<feature type="active site" description="Nucleophile">
    <location>
        <position position="136"/>
    </location>
</feature>
<feature type="binding site" evidence="1">
    <location>
        <begin position="52"/>
        <end position="53"/>
    </location>
    <ligand>
        <name>FMN</name>
        <dbReference type="ChEBI" id="CHEBI:58210"/>
    </ligand>
</feature>
<feature type="binding site" evidence="1">
    <location>
        <position position="52"/>
    </location>
    <ligand>
        <name>substrate</name>
    </ligand>
</feature>
<feature type="binding site" evidence="1">
    <location>
        <begin position="76"/>
        <end position="80"/>
    </location>
    <ligand>
        <name>substrate</name>
    </ligand>
</feature>
<feature type="binding site" evidence="1">
    <location>
        <position position="133"/>
    </location>
    <ligand>
        <name>FMN</name>
        <dbReference type="ChEBI" id="CHEBI:58210"/>
    </ligand>
</feature>
<feature type="binding site" evidence="1">
    <location>
        <position position="133"/>
    </location>
    <ligand>
        <name>substrate</name>
    </ligand>
</feature>
<feature type="binding site" evidence="1">
    <location>
        <position position="171"/>
    </location>
    <ligand>
        <name>FMN</name>
        <dbReference type="ChEBI" id="CHEBI:58210"/>
    </ligand>
</feature>
<feature type="binding site" evidence="1">
    <location>
        <position position="197"/>
    </location>
    <ligand>
        <name>FMN</name>
        <dbReference type="ChEBI" id="CHEBI:58210"/>
    </ligand>
</feature>
<feature type="binding site" evidence="1">
    <location>
        <begin position="198"/>
        <end position="199"/>
    </location>
    <ligand>
        <name>substrate</name>
    </ligand>
</feature>
<feature type="binding site" evidence="1">
    <location>
        <position position="223"/>
    </location>
    <ligand>
        <name>FMN</name>
        <dbReference type="ChEBI" id="CHEBI:58210"/>
    </ligand>
</feature>
<feature type="binding site" evidence="1">
    <location>
        <begin position="249"/>
        <end position="250"/>
    </location>
    <ligand>
        <name>FMN</name>
        <dbReference type="ChEBI" id="CHEBI:58210"/>
    </ligand>
</feature>
<feature type="binding site" evidence="1">
    <location>
        <begin position="271"/>
        <end position="272"/>
    </location>
    <ligand>
        <name>FMN</name>
        <dbReference type="ChEBI" id="CHEBI:58210"/>
    </ligand>
</feature>
<name>PYRDB_METAC</name>
<dbReference type="EC" id="1.3.1.14"/>
<dbReference type="EMBL" id="AE010299">
    <property type="protein sequence ID" value="AAM04027.1"/>
    <property type="molecule type" value="Genomic_DNA"/>
</dbReference>
<dbReference type="SMR" id="Q8TT55"/>
<dbReference type="FunCoup" id="Q8TT55">
    <property type="interactions" value="229"/>
</dbReference>
<dbReference type="STRING" id="188937.MA_0583"/>
<dbReference type="EnsemblBacteria" id="AAM04027">
    <property type="protein sequence ID" value="AAM04027"/>
    <property type="gene ID" value="MA_0583"/>
</dbReference>
<dbReference type="KEGG" id="mac:MA_0583"/>
<dbReference type="HOGENOM" id="CLU_042042_0_1_2"/>
<dbReference type="InParanoid" id="Q8TT55"/>
<dbReference type="PhylomeDB" id="Q8TT55"/>
<dbReference type="UniPathway" id="UPA00070">
    <property type="reaction ID" value="UER00945"/>
</dbReference>
<dbReference type="Proteomes" id="UP000002487">
    <property type="component" value="Chromosome"/>
</dbReference>
<dbReference type="GO" id="GO:0005737">
    <property type="term" value="C:cytoplasm"/>
    <property type="evidence" value="ECO:0000318"/>
    <property type="project" value="GO_Central"/>
</dbReference>
<dbReference type="GO" id="GO:0004589">
    <property type="term" value="F:dihydroorotate dehydrogenase (NAD+) activity"/>
    <property type="evidence" value="ECO:0007669"/>
    <property type="project" value="UniProtKB-EC"/>
</dbReference>
<dbReference type="GO" id="GO:0004152">
    <property type="term" value="F:dihydroorotate dehydrogenase activity"/>
    <property type="evidence" value="ECO:0000318"/>
    <property type="project" value="GO_Central"/>
</dbReference>
<dbReference type="GO" id="GO:0006207">
    <property type="term" value="P:'de novo' pyrimidine nucleobase biosynthetic process"/>
    <property type="evidence" value="ECO:0000318"/>
    <property type="project" value="GO_Central"/>
</dbReference>
<dbReference type="GO" id="GO:0044205">
    <property type="term" value="P:'de novo' UMP biosynthetic process"/>
    <property type="evidence" value="ECO:0007669"/>
    <property type="project" value="UniProtKB-UniRule"/>
</dbReference>
<dbReference type="CDD" id="cd04740">
    <property type="entry name" value="DHOD_1B_like"/>
    <property type="match status" value="1"/>
</dbReference>
<dbReference type="FunFam" id="3.20.20.70:FF:000027">
    <property type="entry name" value="Dihydropyrimidine dehydrogenase [NADP(+)]"/>
    <property type="match status" value="1"/>
</dbReference>
<dbReference type="Gene3D" id="3.20.20.70">
    <property type="entry name" value="Aldolase class I"/>
    <property type="match status" value="1"/>
</dbReference>
<dbReference type="HAMAP" id="MF_00224">
    <property type="entry name" value="DHO_dh_type1"/>
    <property type="match status" value="1"/>
</dbReference>
<dbReference type="InterPro" id="IPR013785">
    <property type="entry name" value="Aldolase_TIM"/>
</dbReference>
<dbReference type="InterPro" id="IPR050074">
    <property type="entry name" value="DHO_dehydrogenase"/>
</dbReference>
<dbReference type="InterPro" id="IPR033888">
    <property type="entry name" value="DHOD_1B"/>
</dbReference>
<dbReference type="InterPro" id="IPR024920">
    <property type="entry name" value="Dihydroorotate_DH_1"/>
</dbReference>
<dbReference type="InterPro" id="IPR012135">
    <property type="entry name" value="Dihydroorotate_DH_1_2"/>
</dbReference>
<dbReference type="InterPro" id="IPR005720">
    <property type="entry name" value="Dihydroorotate_DH_cat"/>
</dbReference>
<dbReference type="InterPro" id="IPR001295">
    <property type="entry name" value="Dihydroorotate_DH_CS"/>
</dbReference>
<dbReference type="InterPro" id="IPR049622">
    <property type="entry name" value="Dihydroorotate_DH_I"/>
</dbReference>
<dbReference type="NCBIfam" id="NF005574">
    <property type="entry name" value="PRK07259.1"/>
    <property type="match status" value="1"/>
</dbReference>
<dbReference type="NCBIfam" id="TIGR01037">
    <property type="entry name" value="pyrD_sub1_fam"/>
    <property type="match status" value="1"/>
</dbReference>
<dbReference type="PANTHER" id="PTHR48109:SF1">
    <property type="entry name" value="DIHYDROOROTATE DEHYDROGENASE (FUMARATE)"/>
    <property type="match status" value="1"/>
</dbReference>
<dbReference type="PANTHER" id="PTHR48109">
    <property type="entry name" value="DIHYDROOROTATE DEHYDROGENASE (QUINONE), MITOCHONDRIAL-RELATED"/>
    <property type="match status" value="1"/>
</dbReference>
<dbReference type="Pfam" id="PF01180">
    <property type="entry name" value="DHO_dh"/>
    <property type="match status" value="1"/>
</dbReference>
<dbReference type="PIRSF" id="PIRSF000164">
    <property type="entry name" value="DHO_oxidase"/>
    <property type="match status" value="1"/>
</dbReference>
<dbReference type="SUPFAM" id="SSF51395">
    <property type="entry name" value="FMN-linked oxidoreductases"/>
    <property type="match status" value="1"/>
</dbReference>
<dbReference type="PROSITE" id="PS00912">
    <property type="entry name" value="DHODEHASE_2"/>
    <property type="match status" value="1"/>
</dbReference>
<sequence>MPAGRKWSYPMYNLTGLELKNPTILAAGVLGTTGASLCRVAREGGAGAVVTKSIGPAPKTGHSNPSMIKLDCGFLNAMGLPNPSYPGFLQELEFAKNNSAVPVIASIFGGAPSEFAEVAEGLLPAKPDALELNVSCPHAEGYGAAVGSNPCLVEAVTAAVKDVVNVPVWVKLTPNVADITCIGNAAESGGADAVVAINTVKGMAIDIESGYPVLGNRSGGLSGKAVKPVAVKCVYDLYTALEIPVIGVGGVSSWEDAVELMMAGAAAVQVGSAVYDRVDIFSEIGAGIEAFLERKGYSDIQKIIGLSHEMV</sequence>
<evidence type="ECO:0000250" key="1"/>
<evidence type="ECO:0000305" key="2"/>